<dbReference type="EC" id="1.5.1.5" evidence="1"/>
<dbReference type="EC" id="3.5.4.9" evidence="1"/>
<dbReference type="EMBL" id="CP000446">
    <property type="protein sequence ID" value="ABI39568.1"/>
    <property type="molecule type" value="Genomic_DNA"/>
</dbReference>
<dbReference type="RefSeq" id="WP_011623249.1">
    <property type="nucleotide sequence ID" value="NC_008321.1"/>
</dbReference>
<dbReference type="SMR" id="Q0HH99"/>
<dbReference type="KEGG" id="she:Shewmr4_2497"/>
<dbReference type="HOGENOM" id="CLU_034045_2_1_6"/>
<dbReference type="UniPathway" id="UPA00193"/>
<dbReference type="GO" id="GO:0005829">
    <property type="term" value="C:cytosol"/>
    <property type="evidence" value="ECO:0007669"/>
    <property type="project" value="TreeGrafter"/>
</dbReference>
<dbReference type="GO" id="GO:0004477">
    <property type="term" value="F:methenyltetrahydrofolate cyclohydrolase activity"/>
    <property type="evidence" value="ECO:0007669"/>
    <property type="project" value="UniProtKB-UniRule"/>
</dbReference>
<dbReference type="GO" id="GO:0004488">
    <property type="term" value="F:methylenetetrahydrofolate dehydrogenase (NADP+) activity"/>
    <property type="evidence" value="ECO:0007669"/>
    <property type="project" value="UniProtKB-UniRule"/>
</dbReference>
<dbReference type="GO" id="GO:0000105">
    <property type="term" value="P:L-histidine biosynthetic process"/>
    <property type="evidence" value="ECO:0007669"/>
    <property type="project" value="UniProtKB-KW"/>
</dbReference>
<dbReference type="GO" id="GO:0009086">
    <property type="term" value="P:methionine biosynthetic process"/>
    <property type="evidence" value="ECO:0007669"/>
    <property type="project" value="UniProtKB-KW"/>
</dbReference>
<dbReference type="GO" id="GO:0006164">
    <property type="term" value="P:purine nucleotide biosynthetic process"/>
    <property type="evidence" value="ECO:0007669"/>
    <property type="project" value="UniProtKB-KW"/>
</dbReference>
<dbReference type="GO" id="GO:0035999">
    <property type="term" value="P:tetrahydrofolate interconversion"/>
    <property type="evidence" value="ECO:0007669"/>
    <property type="project" value="UniProtKB-UniRule"/>
</dbReference>
<dbReference type="CDD" id="cd01080">
    <property type="entry name" value="NAD_bind_m-THF_DH_Cyclohyd"/>
    <property type="match status" value="1"/>
</dbReference>
<dbReference type="FunFam" id="3.40.50.10860:FF:000001">
    <property type="entry name" value="Bifunctional protein FolD"/>
    <property type="match status" value="1"/>
</dbReference>
<dbReference type="FunFam" id="3.40.50.720:FF:000006">
    <property type="entry name" value="Bifunctional protein FolD"/>
    <property type="match status" value="1"/>
</dbReference>
<dbReference type="Gene3D" id="3.40.50.10860">
    <property type="entry name" value="Leucine Dehydrogenase, chain A, domain 1"/>
    <property type="match status" value="1"/>
</dbReference>
<dbReference type="Gene3D" id="3.40.50.720">
    <property type="entry name" value="NAD(P)-binding Rossmann-like Domain"/>
    <property type="match status" value="1"/>
</dbReference>
<dbReference type="HAMAP" id="MF_01576">
    <property type="entry name" value="THF_DHG_CYH"/>
    <property type="match status" value="1"/>
</dbReference>
<dbReference type="InterPro" id="IPR046346">
    <property type="entry name" value="Aminoacid_DH-like_N_sf"/>
</dbReference>
<dbReference type="InterPro" id="IPR036291">
    <property type="entry name" value="NAD(P)-bd_dom_sf"/>
</dbReference>
<dbReference type="InterPro" id="IPR000672">
    <property type="entry name" value="THF_DH/CycHdrlase"/>
</dbReference>
<dbReference type="InterPro" id="IPR020630">
    <property type="entry name" value="THF_DH/CycHdrlase_cat_dom"/>
</dbReference>
<dbReference type="InterPro" id="IPR020867">
    <property type="entry name" value="THF_DH/CycHdrlase_CS"/>
</dbReference>
<dbReference type="InterPro" id="IPR020631">
    <property type="entry name" value="THF_DH/CycHdrlase_NAD-bd_dom"/>
</dbReference>
<dbReference type="NCBIfam" id="NF008058">
    <property type="entry name" value="PRK10792.1"/>
    <property type="match status" value="1"/>
</dbReference>
<dbReference type="NCBIfam" id="NF010783">
    <property type="entry name" value="PRK14186.1"/>
    <property type="match status" value="1"/>
</dbReference>
<dbReference type="PANTHER" id="PTHR48099:SF5">
    <property type="entry name" value="C-1-TETRAHYDROFOLATE SYNTHASE, CYTOPLASMIC"/>
    <property type="match status" value="1"/>
</dbReference>
<dbReference type="PANTHER" id="PTHR48099">
    <property type="entry name" value="C-1-TETRAHYDROFOLATE SYNTHASE, CYTOPLASMIC-RELATED"/>
    <property type="match status" value="1"/>
</dbReference>
<dbReference type="Pfam" id="PF00763">
    <property type="entry name" value="THF_DHG_CYH"/>
    <property type="match status" value="1"/>
</dbReference>
<dbReference type="Pfam" id="PF02882">
    <property type="entry name" value="THF_DHG_CYH_C"/>
    <property type="match status" value="1"/>
</dbReference>
<dbReference type="PRINTS" id="PR00085">
    <property type="entry name" value="THFDHDRGNASE"/>
</dbReference>
<dbReference type="SUPFAM" id="SSF53223">
    <property type="entry name" value="Aminoacid dehydrogenase-like, N-terminal domain"/>
    <property type="match status" value="1"/>
</dbReference>
<dbReference type="SUPFAM" id="SSF51735">
    <property type="entry name" value="NAD(P)-binding Rossmann-fold domains"/>
    <property type="match status" value="1"/>
</dbReference>
<dbReference type="PROSITE" id="PS00767">
    <property type="entry name" value="THF_DHG_CYH_2"/>
    <property type="match status" value="1"/>
</dbReference>
<keyword id="KW-0028">Amino-acid biosynthesis</keyword>
<keyword id="KW-0368">Histidine biosynthesis</keyword>
<keyword id="KW-0378">Hydrolase</keyword>
<keyword id="KW-0486">Methionine biosynthesis</keyword>
<keyword id="KW-0511">Multifunctional enzyme</keyword>
<keyword id="KW-0521">NADP</keyword>
<keyword id="KW-0554">One-carbon metabolism</keyword>
<keyword id="KW-0560">Oxidoreductase</keyword>
<keyword id="KW-0658">Purine biosynthesis</keyword>
<proteinExistence type="inferred from homology"/>
<comment type="function">
    <text evidence="1">Catalyzes the oxidation of 5,10-methylenetetrahydrofolate to 5,10-methenyltetrahydrofolate and then the hydrolysis of 5,10-methenyltetrahydrofolate to 10-formyltetrahydrofolate.</text>
</comment>
<comment type="catalytic activity">
    <reaction evidence="1">
        <text>(6R)-5,10-methylene-5,6,7,8-tetrahydrofolate + NADP(+) = (6R)-5,10-methenyltetrahydrofolate + NADPH</text>
        <dbReference type="Rhea" id="RHEA:22812"/>
        <dbReference type="ChEBI" id="CHEBI:15636"/>
        <dbReference type="ChEBI" id="CHEBI:57455"/>
        <dbReference type="ChEBI" id="CHEBI:57783"/>
        <dbReference type="ChEBI" id="CHEBI:58349"/>
        <dbReference type="EC" id="1.5.1.5"/>
    </reaction>
</comment>
<comment type="catalytic activity">
    <reaction evidence="1">
        <text>(6R)-5,10-methenyltetrahydrofolate + H2O = (6R)-10-formyltetrahydrofolate + H(+)</text>
        <dbReference type="Rhea" id="RHEA:23700"/>
        <dbReference type="ChEBI" id="CHEBI:15377"/>
        <dbReference type="ChEBI" id="CHEBI:15378"/>
        <dbReference type="ChEBI" id="CHEBI:57455"/>
        <dbReference type="ChEBI" id="CHEBI:195366"/>
        <dbReference type="EC" id="3.5.4.9"/>
    </reaction>
</comment>
<comment type="pathway">
    <text evidence="1">One-carbon metabolism; tetrahydrofolate interconversion.</text>
</comment>
<comment type="subunit">
    <text evidence="1">Homodimer.</text>
</comment>
<comment type="similarity">
    <text evidence="1">Belongs to the tetrahydrofolate dehydrogenase/cyclohydrolase family.</text>
</comment>
<reference key="1">
    <citation type="submission" date="2006-08" db="EMBL/GenBank/DDBJ databases">
        <title>Complete sequence of Shewanella sp. MR-4.</title>
        <authorList>
            <consortium name="US DOE Joint Genome Institute"/>
            <person name="Copeland A."/>
            <person name="Lucas S."/>
            <person name="Lapidus A."/>
            <person name="Barry K."/>
            <person name="Detter J.C."/>
            <person name="Glavina del Rio T."/>
            <person name="Hammon N."/>
            <person name="Israni S."/>
            <person name="Dalin E."/>
            <person name="Tice H."/>
            <person name="Pitluck S."/>
            <person name="Kiss H."/>
            <person name="Brettin T."/>
            <person name="Bruce D."/>
            <person name="Han C."/>
            <person name="Tapia R."/>
            <person name="Gilna P."/>
            <person name="Schmutz J."/>
            <person name="Larimer F."/>
            <person name="Land M."/>
            <person name="Hauser L."/>
            <person name="Kyrpides N."/>
            <person name="Mikhailova N."/>
            <person name="Nealson K."/>
            <person name="Konstantinidis K."/>
            <person name="Klappenbach J."/>
            <person name="Tiedje J."/>
            <person name="Richardson P."/>
        </authorList>
    </citation>
    <scope>NUCLEOTIDE SEQUENCE [LARGE SCALE GENOMIC DNA]</scope>
    <source>
        <strain>MR-4</strain>
    </source>
</reference>
<organism>
    <name type="scientific">Shewanella sp. (strain MR-4)</name>
    <dbReference type="NCBI Taxonomy" id="60480"/>
    <lineage>
        <taxon>Bacteria</taxon>
        <taxon>Pseudomonadati</taxon>
        <taxon>Pseudomonadota</taxon>
        <taxon>Gammaproteobacteria</taxon>
        <taxon>Alteromonadales</taxon>
        <taxon>Shewanellaceae</taxon>
        <taxon>Shewanella</taxon>
    </lineage>
</organism>
<accession>Q0HH99</accession>
<evidence type="ECO:0000255" key="1">
    <source>
        <dbReference type="HAMAP-Rule" id="MF_01576"/>
    </source>
</evidence>
<protein>
    <recommendedName>
        <fullName evidence="1">Bifunctional protein FolD</fullName>
    </recommendedName>
    <domain>
        <recommendedName>
            <fullName evidence="1">Methylenetetrahydrofolate dehydrogenase</fullName>
            <ecNumber evidence="1">1.5.1.5</ecNumber>
        </recommendedName>
    </domain>
    <domain>
        <recommendedName>
            <fullName evidence="1">Methenyltetrahydrofolate cyclohydrolase</fullName>
            <ecNumber evidence="1">3.5.4.9</ecNumber>
        </recommendedName>
    </domain>
</protein>
<gene>
    <name evidence="1" type="primary">folD</name>
    <name type="ordered locus">Shewmr4_2497</name>
</gene>
<name>FOLD_SHESM</name>
<sequence length="284" mass="30575">MTAQIIDGKAIAQSIRTQLREKVTARKEAGQRVPGLAVILVGADPASQVYVGSKRKACEEVGFISRSYDLDTSYTEEALLALIDELNDDPTIDGILVQLPLPAHIEDSKVIERIRPDKDVDGFHPYNVGRLAQRIPVLRSCTPMGIMTLIKSTGVDTYGLDAVVVGASNIVGRPMTLELLLAGCTTTTCHRFTKNLEQKIRQADLVVVAVGKPGFIPGEWIKPGAIVIDVGINRLENGTLVGDVQYDVAAQNASFITPVPGGVGPMTIASLLENTLYAAEQYHD</sequence>
<feature type="chain" id="PRO_0000268495" description="Bifunctional protein FolD">
    <location>
        <begin position="1"/>
        <end position="284"/>
    </location>
</feature>
<feature type="binding site" evidence="1">
    <location>
        <begin position="166"/>
        <end position="168"/>
    </location>
    <ligand>
        <name>NADP(+)</name>
        <dbReference type="ChEBI" id="CHEBI:58349"/>
    </ligand>
</feature>
<feature type="binding site" evidence="1">
    <location>
        <position position="232"/>
    </location>
    <ligand>
        <name>NADP(+)</name>
        <dbReference type="ChEBI" id="CHEBI:58349"/>
    </ligand>
</feature>